<dbReference type="EC" id="4.1.1.50" evidence="1"/>
<dbReference type="EMBL" id="CP001113">
    <property type="protein sequence ID" value="ACF64583.1"/>
    <property type="molecule type" value="Genomic_DNA"/>
</dbReference>
<dbReference type="RefSeq" id="WP_000734276.1">
    <property type="nucleotide sequence ID" value="NZ_CCMR01000003.1"/>
</dbReference>
<dbReference type="KEGG" id="see:SNSL254_A0181"/>
<dbReference type="HOGENOM" id="CLU_092007_0_0_6"/>
<dbReference type="UniPathway" id="UPA00331">
    <property type="reaction ID" value="UER00451"/>
</dbReference>
<dbReference type="Proteomes" id="UP000008824">
    <property type="component" value="Chromosome"/>
</dbReference>
<dbReference type="GO" id="GO:0005829">
    <property type="term" value="C:cytosol"/>
    <property type="evidence" value="ECO:0007669"/>
    <property type="project" value="TreeGrafter"/>
</dbReference>
<dbReference type="GO" id="GO:0004014">
    <property type="term" value="F:adenosylmethionine decarboxylase activity"/>
    <property type="evidence" value="ECO:0007669"/>
    <property type="project" value="UniProtKB-UniRule"/>
</dbReference>
<dbReference type="GO" id="GO:0008295">
    <property type="term" value="P:spermidine biosynthetic process"/>
    <property type="evidence" value="ECO:0007669"/>
    <property type="project" value="UniProtKB-UniRule"/>
</dbReference>
<dbReference type="FunFam" id="3.60.90.10:FF:000001">
    <property type="entry name" value="S-adenosylmethionine decarboxylase proenzyme"/>
    <property type="match status" value="1"/>
</dbReference>
<dbReference type="Gene3D" id="3.60.90.10">
    <property type="entry name" value="S-adenosylmethionine decarboxylase"/>
    <property type="match status" value="1"/>
</dbReference>
<dbReference type="HAMAP" id="MF_00465">
    <property type="entry name" value="AdoMetDC_2"/>
    <property type="match status" value="1"/>
</dbReference>
<dbReference type="InterPro" id="IPR003826">
    <property type="entry name" value="AdoMetDC_fam_prok"/>
</dbReference>
<dbReference type="InterPro" id="IPR009165">
    <property type="entry name" value="S-AdoMet_deCO2ase_bac"/>
</dbReference>
<dbReference type="InterPro" id="IPR016067">
    <property type="entry name" value="S-AdoMet_deCO2ase_core"/>
</dbReference>
<dbReference type="NCBIfam" id="TIGR03331">
    <property type="entry name" value="SAM_DCase_Eco"/>
    <property type="match status" value="1"/>
</dbReference>
<dbReference type="PANTHER" id="PTHR33866">
    <property type="entry name" value="S-ADENOSYLMETHIONINE DECARBOXYLASE PROENZYME"/>
    <property type="match status" value="1"/>
</dbReference>
<dbReference type="PANTHER" id="PTHR33866:SF1">
    <property type="entry name" value="S-ADENOSYLMETHIONINE DECARBOXYLASE PROENZYME"/>
    <property type="match status" value="1"/>
</dbReference>
<dbReference type="Pfam" id="PF02675">
    <property type="entry name" value="AdoMet_dc"/>
    <property type="match status" value="1"/>
</dbReference>
<dbReference type="PIRSF" id="PIRSF001356">
    <property type="entry name" value="SAM_decarboxylas"/>
    <property type="match status" value="1"/>
</dbReference>
<dbReference type="SUPFAM" id="SSF56276">
    <property type="entry name" value="S-adenosylmethionine decarboxylase"/>
    <property type="match status" value="1"/>
</dbReference>
<keyword id="KW-0068">Autocatalytic cleavage</keyword>
<keyword id="KW-0210">Decarboxylase</keyword>
<keyword id="KW-0456">Lyase</keyword>
<keyword id="KW-0620">Polyamine biosynthesis</keyword>
<keyword id="KW-0670">Pyruvate</keyword>
<keyword id="KW-0949">S-adenosyl-L-methionine</keyword>
<keyword id="KW-0704">Schiff base</keyword>
<keyword id="KW-0745">Spermidine biosynthesis</keyword>
<keyword id="KW-0865">Zymogen</keyword>
<name>SPED_SALNS</name>
<sequence length="264" mass="30415">MKKLKLHGFNNLTKSLSFCIYDICYAKTAEERDGYIAYIDELYNANRLTEILSETCSIIGANILNIARQDYEPQGASVTILVSEEPIDPKLIDQTEHPGPLPETVVAHLDKSHICVHTYPESHPEGGLCTFRADIEVSTCGVISPLKALNYLIHQLESDIVTIDYRVRGFTRDVNGMKHFIDHEINSIQNFMSEDMKSLYDMVDVNVYQENIFHTKMLLKEFDLKHYMFHTKPEDLTETERQEITAALWKEMREIYYGRNISAV</sequence>
<evidence type="ECO:0000255" key="1">
    <source>
        <dbReference type="HAMAP-Rule" id="MF_00465"/>
    </source>
</evidence>
<organism>
    <name type="scientific">Salmonella newport (strain SL254)</name>
    <dbReference type="NCBI Taxonomy" id="423368"/>
    <lineage>
        <taxon>Bacteria</taxon>
        <taxon>Pseudomonadati</taxon>
        <taxon>Pseudomonadota</taxon>
        <taxon>Gammaproteobacteria</taxon>
        <taxon>Enterobacterales</taxon>
        <taxon>Enterobacteriaceae</taxon>
        <taxon>Salmonella</taxon>
    </lineage>
</organism>
<accession>B4SU90</accession>
<protein>
    <recommendedName>
        <fullName evidence="1">S-adenosylmethionine decarboxylase proenzyme</fullName>
        <shortName evidence="1">AdoMetDC</shortName>
        <shortName evidence="1">SAMDC</shortName>
        <ecNumber evidence="1">4.1.1.50</ecNumber>
    </recommendedName>
    <component>
        <recommendedName>
            <fullName evidence="1">S-adenosylmethionine decarboxylase beta chain</fullName>
        </recommendedName>
    </component>
    <component>
        <recommendedName>
            <fullName evidence="1">S-adenosylmethionine decarboxylase alpha chain</fullName>
        </recommendedName>
    </component>
</protein>
<comment type="function">
    <text evidence="1">Catalyzes the decarboxylation of S-adenosylmethionine to S-adenosylmethioninamine (dcAdoMet), the propylamine donor required for the synthesis of the polyamines spermine and spermidine from the diamine putrescine.</text>
</comment>
<comment type="catalytic activity">
    <reaction evidence="1">
        <text>S-adenosyl-L-methionine + H(+) = S-adenosyl 3-(methylsulfanyl)propylamine + CO2</text>
        <dbReference type="Rhea" id="RHEA:15981"/>
        <dbReference type="ChEBI" id="CHEBI:15378"/>
        <dbReference type="ChEBI" id="CHEBI:16526"/>
        <dbReference type="ChEBI" id="CHEBI:57443"/>
        <dbReference type="ChEBI" id="CHEBI:59789"/>
        <dbReference type="EC" id="4.1.1.50"/>
    </reaction>
</comment>
<comment type="cofactor">
    <cofactor evidence="1">
        <name>pyruvate</name>
        <dbReference type="ChEBI" id="CHEBI:15361"/>
    </cofactor>
    <text evidence="1">Binds 1 pyruvoyl group covalently per subunit.</text>
</comment>
<comment type="pathway">
    <text evidence="1">Amine and polyamine biosynthesis; S-adenosylmethioninamine biosynthesis; S-adenosylmethioninamine from S-adenosyl-L-methionine: step 1/1.</text>
</comment>
<comment type="subunit">
    <text evidence="1">Heterooctamer of four alpha and four beta chains arranged as a tetramer of alpha/beta heterodimers.</text>
</comment>
<comment type="PTM">
    <text evidence="1">Is synthesized initially as an inactive proenzyme. Formation of the active enzyme involves a self-maturation process in which the active site pyruvoyl group is generated from an internal serine residue via an autocatalytic post-translational modification. Two non-identical subunits are generated from the proenzyme in this reaction, and the pyruvate is formed at the N-terminus of the alpha chain, which is derived from the carboxyl end of the proenzyme. The post-translation cleavage follows an unusual pathway, termed non-hydrolytic serinolysis, in which the side chain hydroxyl group of the serine supplies its oxygen atom to form the C-terminus of the beta chain, while the remainder of the serine residue undergoes an oxidative deamination to produce ammonia and the pyruvoyl group blocking the N-terminus of the alpha chain.</text>
</comment>
<comment type="similarity">
    <text evidence="1">Belongs to the prokaryotic AdoMetDC family. Type 2 subfamily.</text>
</comment>
<feature type="chain" id="PRO_0000364407" description="S-adenosylmethionine decarboxylase beta chain" evidence="1">
    <location>
        <begin position="1"/>
        <end position="111"/>
    </location>
</feature>
<feature type="chain" id="PRO_0000364408" description="S-adenosylmethionine decarboxylase alpha chain" evidence="1">
    <location>
        <begin position="112"/>
        <end position="264"/>
    </location>
</feature>
<feature type="active site" description="Schiff-base intermediate with substrate; via pyruvic acid" evidence="1">
    <location>
        <position position="112"/>
    </location>
</feature>
<feature type="active site" description="Proton acceptor; for processing activity" evidence="1">
    <location>
        <position position="117"/>
    </location>
</feature>
<feature type="active site" description="Proton donor; for catalytic activity" evidence="1">
    <location>
        <position position="140"/>
    </location>
</feature>
<feature type="site" description="Cleavage (non-hydrolytic); by autolysis" evidence="1">
    <location>
        <begin position="111"/>
        <end position="112"/>
    </location>
</feature>
<feature type="modified residue" description="Pyruvic acid (Ser); by autocatalysis" evidence="1">
    <location>
        <position position="112"/>
    </location>
</feature>
<proteinExistence type="inferred from homology"/>
<reference key="1">
    <citation type="journal article" date="2011" name="J. Bacteriol.">
        <title>Comparative genomics of 28 Salmonella enterica isolates: evidence for CRISPR-mediated adaptive sublineage evolution.</title>
        <authorList>
            <person name="Fricke W.F."/>
            <person name="Mammel M.K."/>
            <person name="McDermott P.F."/>
            <person name="Tartera C."/>
            <person name="White D.G."/>
            <person name="Leclerc J.E."/>
            <person name="Ravel J."/>
            <person name="Cebula T.A."/>
        </authorList>
    </citation>
    <scope>NUCLEOTIDE SEQUENCE [LARGE SCALE GENOMIC DNA]</scope>
    <source>
        <strain>SL254</strain>
    </source>
</reference>
<gene>
    <name evidence="1" type="primary">speD</name>
    <name type="ordered locus">SNSL254_A0181</name>
</gene>